<name>RL24_BACAN</name>
<sequence length="103" mass="11228">MHVKKGDKVQVITGKDKGKQGVILVAFPKQNRVIVEGVNIVKKHSKPSQLNPQGGIITKEAPIHVSNVMILDPKTGEPTRVGFKVEDGKKVRIAKKSGELLDK</sequence>
<keyword id="KW-1185">Reference proteome</keyword>
<keyword id="KW-0687">Ribonucleoprotein</keyword>
<keyword id="KW-0689">Ribosomal protein</keyword>
<keyword id="KW-0694">RNA-binding</keyword>
<keyword id="KW-0699">rRNA-binding</keyword>
<protein>
    <recommendedName>
        <fullName evidence="1">Large ribosomal subunit protein uL24</fullName>
    </recommendedName>
    <alternativeName>
        <fullName evidence="2">50S ribosomal protein L24</fullName>
    </alternativeName>
</protein>
<accession>Q81VR9</accession>
<accession>Q6I4S3</accession>
<accession>Q6KYG9</accession>
<reference key="1">
    <citation type="journal article" date="2003" name="Nature">
        <title>The genome sequence of Bacillus anthracis Ames and comparison to closely related bacteria.</title>
        <authorList>
            <person name="Read T.D."/>
            <person name="Peterson S.N."/>
            <person name="Tourasse N.J."/>
            <person name="Baillie L.W."/>
            <person name="Paulsen I.T."/>
            <person name="Nelson K.E."/>
            <person name="Tettelin H."/>
            <person name="Fouts D.E."/>
            <person name="Eisen J.A."/>
            <person name="Gill S.R."/>
            <person name="Holtzapple E.K."/>
            <person name="Okstad O.A."/>
            <person name="Helgason E."/>
            <person name="Rilstone J."/>
            <person name="Wu M."/>
            <person name="Kolonay J.F."/>
            <person name="Beanan M.J."/>
            <person name="Dodson R.J."/>
            <person name="Brinkac L.M."/>
            <person name="Gwinn M.L."/>
            <person name="DeBoy R.T."/>
            <person name="Madpu R."/>
            <person name="Daugherty S.C."/>
            <person name="Durkin A.S."/>
            <person name="Haft D.H."/>
            <person name="Nelson W.C."/>
            <person name="Peterson J.D."/>
            <person name="Pop M."/>
            <person name="Khouri H.M."/>
            <person name="Radune D."/>
            <person name="Benton J.L."/>
            <person name="Mahamoud Y."/>
            <person name="Jiang L."/>
            <person name="Hance I.R."/>
            <person name="Weidman J.F."/>
            <person name="Berry K.J."/>
            <person name="Plaut R.D."/>
            <person name="Wolf A.M."/>
            <person name="Watkins K.L."/>
            <person name="Nierman W.C."/>
            <person name="Hazen A."/>
            <person name="Cline R.T."/>
            <person name="Redmond C."/>
            <person name="Thwaite J.E."/>
            <person name="White O."/>
            <person name="Salzberg S.L."/>
            <person name="Thomason B."/>
            <person name="Friedlander A.M."/>
            <person name="Koehler T.M."/>
            <person name="Hanna P.C."/>
            <person name="Kolstoe A.-B."/>
            <person name="Fraser C.M."/>
        </authorList>
    </citation>
    <scope>NUCLEOTIDE SEQUENCE [LARGE SCALE GENOMIC DNA]</scope>
    <source>
        <strain>Ames / isolate Porton</strain>
    </source>
</reference>
<reference key="2">
    <citation type="journal article" date="2009" name="J. Bacteriol.">
        <title>The complete genome sequence of Bacillus anthracis Ames 'Ancestor'.</title>
        <authorList>
            <person name="Ravel J."/>
            <person name="Jiang L."/>
            <person name="Stanley S.T."/>
            <person name="Wilson M.R."/>
            <person name="Decker R.S."/>
            <person name="Read T.D."/>
            <person name="Worsham P."/>
            <person name="Keim P.S."/>
            <person name="Salzberg S.L."/>
            <person name="Fraser-Liggett C.M."/>
            <person name="Rasko D.A."/>
        </authorList>
    </citation>
    <scope>NUCLEOTIDE SEQUENCE [LARGE SCALE GENOMIC DNA]</scope>
    <source>
        <strain>Ames ancestor</strain>
    </source>
</reference>
<reference key="3">
    <citation type="submission" date="2004-01" db="EMBL/GenBank/DDBJ databases">
        <title>Complete genome sequence of Bacillus anthracis Sterne.</title>
        <authorList>
            <person name="Brettin T.S."/>
            <person name="Bruce D."/>
            <person name="Challacombe J.F."/>
            <person name="Gilna P."/>
            <person name="Han C."/>
            <person name="Hill K."/>
            <person name="Hitchcock P."/>
            <person name="Jackson P."/>
            <person name="Keim P."/>
            <person name="Longmire J."/>
            <person name="Lucas S."/>
            <person name="Okinaka R."/>
            <person name="Richardson P."/>
            <person name="Rubin E."/>
            <person name="Tice H."/>
        </authorList>
    </citation>
    <scope>NUCLEOTIDE SEQUENCE [LARGE SCALE GENOMIC DNA]</scope>
    <source>
        <strain>Sterne</strain>
    </source>
</reference>
<evidence type="ECO:0000255" key="1">
    <source>
        <dbReference type="HAMAP-Rule" id="MF_01326"/>
    </source>
</evidence>
<evidence type="ECO:0000305" key="2"/>
<gene>
    <name evidence="1" type="primary">rplX</name>
    <name type="ordered locus">BA_0121</name>
    <name type="ordered locus">GBAA_0121</name>
    <name type="ordered locus">BAS0121</name>
</gene>
<proteinExistence type="inferred from homology"/>
<feature type="chain" id="PRO_0000130619" description="Large ribosomal subunit protein uL24">
    <location>
        <begin position="1"/>
        <end position="103"/>
    </location>
</feature>
<dbReference type="EMBL" id="AE016879">
    <property type="protein sequence ID" value="AAP24175.1"/>
    <property type="molecule type" value="Genomic_DNA"/>
</dbReference>
<dbReference type="EMBL" id="AE017334">
    <property type="protein sequence ID" value="AAT29201.1"/>
    <property type="molecule type" value="Genomic_DNA"/>
</dbReference>
<dbReference type="EMBL" id="AE017225">
    <property type="protein sequence ID" value="AAT52458.1"/>
    <property type="molecule type" value="Genomic_DNA"/>
</dbReference>
<dbReference type="RefSeq" id="NP_842689.1">
    <property type="nucleotide sequence ID" value="NC_003997.3"/>
</dbReference>
<dbReference type="RefSeq" id="WP_000558200.1">
    <property type="nucleotide sequence ID" value="NZ_WXXJ01000051.1"/>
</dbReference>
<dbReference type="RefSeq" id="YP_026407.1">
    <property type="nucleotide sequence ID" value="NC_005945.1"/>
</dbReference>
<dbReference type="SMR" id="Q81VR9"/>
<dbReference type="STRING" id="261594.GBAA_0121"/>
<dbReference type="DNASU" id="1086419"/>
<dbReference type="GeneID" id="93010932"/>
<dbReference type="KEGG" id="ban:BA_0121"/>
<dbReference type="KEGG" id="bar:GBAA_0121"/>
<dbReference type="KEGG" id="bat:BAS0121"/>
<dbReference type="PATRIC" id="fig|198094.11.peg.118"/>
<dbReference type="eggNOG" id="COG0198">
    <property type="taxonomic scope" value="Bacteria"/>
</dbReference>
<dbReference type="HOGENOM" id="CLU_093315_2_0_9"/>
<dbReference type="OMA" id="HISNLML"/>
<dbReference type="OrthoDB" id="9807419at2"/>
<dbReference type="Proteomes" id="UP000000427">
    <property type="component" value="Chromosome"/>
</dbReference>
<dbReference type="Proteomes" id="UP000000594">
    <property type="component" value="Chromosome"/>
</dbReference>
<dbReference type="GO" id="GO:1990904">
    <property type="term" value="C:ribonucleoprotein complex"/>
    <property type="evidence" value="ECO:0007669"/>
    <property type="project" value="UniProtKB-KW"/>
</dbReference>
<dbReference type="GO" id="GO:0005840">
    <property type="term" value="C:ribosome"/>
    <property type="evidence" value="ECO:0007669"/>
    <property type="project" value="UniProtKB-KW"/>
</dbReference>
<dbReference type="GO" id="GO:0019843">
    <property type="term" value="F:rRNA binding"/>
    <property type="evidence" value="ECO:0007669"/>
    <property type="project" value="UniProtKB-UniRule"/>
</dbReference>
<dbReference type="GO" id="GO:0003735">
    <property type="term" value="F:structural constituent of ribosome"/>
    <property type="evidence" value="ECO:0007669"/>
    <property type="project" value="InterPro"/>
</dbReference>
<dbReference type="GO" id="GO:0006412">
    <property type="term" value="P:translation"/>
    <property type="evidence" value="ECO:0007669"/>
    <property type="project" value="UniProtKB-UniRule"/>
</dbReference>
<dbReference type="CDD" id="cd06089">
    <property type="entry name" value="KOW_RPL26"/>
    <property type="match status" value="1"/>
</dbReference>
<dbReference type="FunFam" id="2.30.30.30:FF:000004">
    <property type="entry name" value="50S ribosomal protein L24"/>
    <property type="match status" value="1"/>
</dbReference>
<dbReference type="Gene3D" id="2.30.30.30">
    <property type="match status" value="1"/>
</dbReference>
<dbReference type="HAMAP" id="MF_01326_B">
    <property type="entry name" value="Ribosomal_uL24_B"/>
    <property type="match status" value="1"/>
</dbReference>
<dbReference type="InterPro" id="IPR005824">
    <property type="entry name" value="KOW"/>
</dbReference>
<dbReference type="InterPro" id="IPR014722">
    <property type="entry name" value="Rib_uL2_dom2"/>
</dbReference>
<dbReference type="InterPro" id="IPR003256">
    <property type="entry name" value="Ribosomal_uL24"/>
</dbReference>
<dbReference type="InterPro" id="IPR005825">
    <property type="entry name" value="Ribosomal_uL24_CS"/>
</dbReference>
<dbReference type="InterPro" id="IPR041988">
    <property type="entry name" value="Ribosomal_uL24_KOW"/>
</dbReference>
<dbReference type="InterPro" id="IPR008991">
    <property type="entry name" value="Translation_prot_SH3-like_sf"/>
</dbReference>
<dbReference type="NCBIfam" id="TIGR01079">
    <property type="entry name" value="rplX_bact"/>
    <property type="match status" value="1"/>
</dbReference>
<dbReference type="PANTHER" id="PTHR12903">
    <property type="entry name" value="MITOCHONDRIAL RIBOSOMAL PROTEIN L24"/>
    <property type="match status" value="1"/>
</dbReference>
<dbReference type="Pfam" id="PF00467">
    <property type="entry name" value="KOW"/>
    <property type="match status" value="1"/>
</dbReference>
<dbReference type="Pfam" id="PF17136">
    <property type="entry name" value="ribosomal_L24"/>
    <property type="match status" value="1"/>
</dbReference>
<dbReference type="SMART" id="SM00739">
    <property type="entry name" value="KOW"/>
    <property type="match status" value="1"/>
</dbReference>
<dbReference type="SUPFAM" id="SSF50104">
    <property type="entry name" value="Translation proteins SH3-like domain"/>
    <property type="match status" value="1"/>
</dbReference>
<dbReference type="PROSITE" id="PS01108">
    <property type="entry name" value="RIBOSOMAL_L24"/>
    <property type="match status" value="1"/>
</dbReference>
<comment type="function">
    <text evidence="1">One of two assembly initiator proteins, it binds directly to the 5'-end of the 23S rRNA, where it nucleates assembly of the 50S subunit.</text>
</comment>
<comment type="function">
    <text evidence="1">One of the proteins that surrounds the polypeptide exit tunnel on the outside of the subunit.</text>
</comment>
<comment type="subunit">
    <text evidence="1">Part of the 50S ribosomal subunit.</text>
</comment>
<comment type="similarity">
    <text evidence="1">Belongs to the universal ribosomal protein uL24 family.</text>
</comment>
<organism>
    <name type="scientific">Bacillus anthracis</name>
    <dbReference type="NCBI Taxonomy" id="1392"/>
    <lineage>
        <taxon>Bacteria</taxon>
        <taxon>Bacillati</taxon>
        <taxon>Bacillota</taxon>
        <taxon>Bacilli</taxon>
        <taxon>Bacillales</taxon>
        <taxon>Bacillaceae</taxon>
        <taxon>Bacillus</taxon>
        <taxon>Bacillus cereus group</taxon>
    </lineage>
</organism>